<comment type="similarity">
    <text evidence="1">Belongs to the UPF0340 family.</text>
</comment>
<organism>
    <name type="scientific">Streptococcus equi subsp. equi (strain 4047)</name>
    <dbReference type="NCBI Taxonomy" id="553482"/>
    <lineage>
        <taxon>Bacteria</taxon>
        <taxon>Bacillati</taxon>
        <taxon>Bacillota</taxon>
        <taxon>Bacilli</taxon>
        <taxon>Lactobacillales</taxon>
        <taxon>Streptococcaceae</taxon>
        <taxon>Streptococcus</taxon>
    </lineage>
</organism>
<accession>C0M8L1</accession>
<name>Y1951_STRE4</name>
<feature type="chain" id="PRO_1000148526" description="UPF0340 protein SEQ_1951">
    <location>
        <begin position="1"/>
        <end position="186"/>
    </location>
</feature>
<gene>
    <name type="ordered locus">SEQ_1951</name>
</gene>
<proteinExistence type="inferred from homology"/>
<dbReference type="EMBL" id="FM204883">
    <property type="protein sequence ID" value="CAW95180.1"/>
    <property type="molecule type" value="Genomic_DNA"/>
</dbReference>
<dbReference type="RefSeq" id="WP_012680112.1">
    <property type="nucleotide sequence ID" value="NC_012471.1"/>
</dbReference>
<dbReference type="SMR" id="C0M8L1"/>
<dbReference type="KEGG" id="seu:SEQ_1951"/>
<dbReference type="HOGENOM" id="CLU_106658_0_0_9"/>
<dbReference type="OrthoDB" id="9803187at2"/>
<dbReference type="Proteomes" id="UP000001365">
    <property type="component" value="Chromosome"/>
</dbReference>
<dbReference type="Gene3D" id="3.40.50.10360">
    <property type="entry name" value="Hypothetical protein TT1679"/>
    <property type="match status" value="1"/>
</dbReference>
<dbReference type="HAMAP" id="MF_00800">
    <property type="entry name" value="UPF0340"/>
    <property type="match status" value="1"/>
</dbReference>
<dbReference type="InterPro" id="IPR028345">
    <property type="entry name" value="Antibiotic_NAT-like"/>
</dbReference>
<dbReference type="InterPro" id="IPR006340">
    <property type="entry name" value="DUF436"/>
</dbReference>
<dbReference type="NCBIfam" id="TIGR01440">
    <property type="entry name" value="TIGR01440 family protein"/>
    <property type="match status" value="1"/>
</dbReference>
<dbReference type="Pfam" id="PF04260">
    <property type="entry name" value="DUF436"/>
    <property type="match status" value="1"/>
</dbReference>
<dbReference type="PIRSF" id="PIRSF007510">
    <property type="entry name" value="UCP007510"/>
    <property type="match status" value="1"/>
</dbReference>
<dbReference type="SUPFAM" id="SSF110710">
    <property type="entry name" value="TTHA0583/YokD-like"/>
    <property type="match status" value="1"/>
</dbReference>
<reference key="1">
    <citation type="journal article" date="2009" name="PLoS Pathog.">
        <title>Genomic evidence for the evolution of Streptococcus equi: host restriction, increased virulence, and genetic exchange with human pathogens.</title>
        <authorList>
            <person name="Holden M.T.G."/>
            <person name="Heather Z."/>
            <person name="Paillot R."/>
            <person name="Steward K.F."/>
            <person name="Webb K."/>
            <person name="Ainslie F."/>
            <person name="Jourdan T."/>
            <person name="Bason N.C."/>
            <person name="Holroyd N.E."/>
            <person name="Mungall K."/>
            <person name="Quail M.A."/>
            <person name="Sanders M."/>
            <person name="Simmonds M."/>
            <person name="Willey D."/>
            <person name="Brooks K."/>
            <person name="Aanensen D.M."/>
            <person name="Spratt B.G."/>
            <person name="Jolley K.A."/>
            <person name="Maiden M.C.J."/>
            <person name="Kehoe M."/>
            <person name="Chanter N."/>
            <person name="Bentley S.D."/>
            <person name="Robinson C."/>
            <person name="Maskell D.J."/>
            <person name="Parkhill J."/>
            <person name="Waller A.S."/>
        </authorList>
    </citation>
    <scope>NUCLEOTIDE SEQUENCE [LARGE SCALE GENOMIC DNA]</scope>
    <source>
        <strain>4047</strain>
    </source>
</reference>
<evidence type="ECO:0000255" key="1">
    <source>
        <dbReference type="HAMAP-Rule" id="MF_00800"/>
    </source>
</evidence>
<protein>
    <recommendedName>
        <fullName evidence="1">UPF0340 protein SEQ_1951</fullName>
    </recommendedName>
</protein>
<sequence length="186" mass="20187">MNLKVLREEARSILLDIVERSAIKKGQLFVLGLSSSEVLGGRIGQHSSLEVGEVIVKLILEELSFRGIHLAVQGCEHINRALVLEESVAEEYRLEIVNVLPSLHAGGSGQLAAFKYMKQPVEVEAIAAHAGLDIGDTSIGMHVKRVQVPLVPIQRELGGAHVTALASRPKLIGGVRARYQPDPIRK</sequence>